<dbReference type="EMBL" id="CP000325">
    <property type="protein sequence ID" value="ABL06025.1"/>
    <property type="molecule type" value="Genomic_DNA"/>
</dbReference>
<dbReference type="RefSeq" id="WP_011741630.1">
    <property type="nucleotide sequence ID" value="NC_008611.1"/>
</dbReference>
<dbReference type="SMR" id="A0PUK6"/>
<dbReference type="KEGG" id="mul:MUL_3960"/>
<dbReference type="eggNOG" id="COG0356">
    <property type="taxonomic scope" value="Bacteria"/>
</dbReference>
<dbReference type="HOGENOM" id="CLU_041018_2_3_11"/>
<dbReference type="Proteomes" id="UP000000765">
    <property type="component" value="Chromosome"/>
</dbReference>
<dbReference type="GO" id="GO:0005886">
    <property type="term" value="C:plasma membrane"/>
    <property type="evidence" value="ECO:0007669"/>
    <property type="project" value="UniProtKB-SubCell"/>
</dbReference>
<dbReference type="GO" id="GO:0045259">
    <property type="term" value="C:proton-transporting ATP synthase complex"/>
    <property type="evidence" value="ECO:0007669"/>
    <property type="project" value="UniProtKB-KW"/>
</dbReference>
<dbReference type="GO" id="GO:0046933">
    <property type="term" value="F:proton-transporting ATP synthase activity, rotational mechanism"/>
    <property type="evidence" value="ECO:0007669"/>
    <property type="project" value="UniProtKB-UniRule"/>
</dbReference>
<dbReference type="GO" id="GO:0042777">
    <property type="term" value="P:proton motive force-driven plasma membrane ATP synthesis"/>
    <property type="evidence" value="ECO:0007669"/>
    <property type="project" value="TreeGrafter"/>
</dbReference>
<dbReference type="CDD" id="cd00310">
    <property type="entry name" value="ATP-synt_Fo_a_6"/>
    <property type="match status" value="1"/>
</dbReference>
<dbReference type="FunFam" id="1.20.120.220:FF:000009">
    <property type="entry name" value="ATP synthase subunit a"/>
    <property type="match status" value="1"/>
</dbReference>
<dbReference type="Gene3D" id="1.20.120.220">
    <property type="entry name" value="ATP synthase, F0 complex, subunit A"/>
    <property type="match status" value="1"/>
</dbReference>
<dbReference type="HAMAP" id="MF_01393">
    <property type="entry name" value="ATP_synth_a_bact"/>
    <property type="match status" value="1"/>
</dbReference>
<dbReference type="InterPro" id="IPR045082">
    <property type="entry name" value="ATP_syn_F0_a_bact/chloroplast"/>
</dbReference>
<dbReference type="InterPro" id="IPR000568">
    <property type="entry name" value="ATP_synth_F0_asu"/>
</dbReference>
<dbReference type="InterPro" id="IPR023011">
    <property type="entry name" value="ATP_synth_F0_asu_AS"/>
</dbReference>
<dbReference type="InterPro" id="IPR035908">
    <property type="entry name" value="F0_ATP_A_sf"/>
</dbReference>
<dbReference type="NCBIfam" id="TIGR01131">
    <property type="entry name" value="ATP_synt_6_or_A"/>
    <property type="match status" value="1"/>
</dbReference>
<dbReference type="PANTHER" id="PTHR42823">
    <property type="entry name" value="ATP SYNTHASE SUBUNIT A, CHLOROPLASTIC"/>
    <property type="match status" value="1"/>
</dbReference>
<dbReference type="PANTHER" id="PTHR42823:SF3">
    <property type="entry name" value="ATP SYNTHASE SUBUNIT A, CHLOROPLASTIC"/>
    <property type="match status" value="1"/>
</dbReference>
<dbReference type="Pfam" id="PF00119">
    <property type="entry name" value="ATP-synt_A"/>
    <property type="match status" value="1"/>
</dbReference>
<dbReference type="PRINTS" id="PR00123">
    <property type="entry name" value="ATPASEA"/>
</dbReference>
<dbReference type="SUPFAM" id="SSF81336">
    <property type="entry name" value="F1F0 ATP synthase subunit A"/>
    <property type="match status" value="1"/>
</dbReference>
<dbReference type="PROSITE" id="PS00449">
    <property type="entry name" value="ATPASE_A"/>
    <property type="match status" value="1"/>
</dbReference>
<accession>A0PUK6</accession>
<organism>
    <name type="scientific">Mycobacterium ulcerans (strain Agy99)</name>
    <dbReference type="NCBI Taxonomy" id="362242"/>
    <lineage>
        <taxon>Bacteria</taxon>
        <taxon>Bacillati</taxon>
        <taxon>Actinomycetota</taxon>
        <taxon>Actinomycetes</taxon>
        <taxon>Mycobacteriales</taxon>
        <taxon>Mycobacteriaceae</taxon>
        <taxon>Mycobacterium</taxon>
        <taxon>Mycobacterium ulcerans group</taxon>
    </lineage>
</organism>
<comment type="function">
    <text evidence="1">Key component of the proton channel; it plays a direct role in the translocation of protons across the membrane.</text>
</comment>
<comment type="subunit">
    <text evidence="1">F-type ATPases have 2 components, CF(1) - the catalytic core - and CF(0) - the membrane proton channel. CF(1) has five subunits: alpha(3), beta(3), gamma(1), delta(1), epsilon(1). CF(0) has three main subunits: a(1), b(2) and c(9-12). The alpha and beta chains form an alternating ring which encloses part of the gamma chain. CF(1) is attached to CF(0) by a central stalk formed by the gamma and epsilon chains, while a peripheral stalk is formed by the delta and b chains.</text>
</comment>
<comment type="subcellular location">
    <subcellularLocation>
        <location evidence="1">Cell membrane</location>
        <topology evidence="1">Multi-pass membrane protein</topology>
    </subcellularLocation>
</comment>
<comment type="similarity">
    <text evidence="1">Belongs to the ATPase A chain family.</text>
</comment>
<name>ATP6_MYCUA</name>
<protein>
    <recommendedName>
        <fullName evidence="1">ATP synthase subunit a</fullName>
    </recommendedName>
    <alternativeName>
        <fullName evidence="1">ATP synthase F0 sector subunit a</fullName>
    </alternativeName>
    <alternativeName>
        <fullName evidence="1">F-ATPase subunit 6</fullName>
    </alternativeName>
</protein>
<sequence length="250" mass="27373">MTASILAAQIEVGEHHTATWLCMTVNTDTVLSTAIAALIVLALAFYLRSKVTSTAVPGGVQLFFEAITIQMRGQVESAIGMRIAPFVLPLAVTIFVFILISNWLSVLPVQYTDEHGQTTELLKPAAADINYVLALALFVFVCYHAAGIWRRGIVGHPIKLLKGHVAILAPINLVEEIAKPISLSLRLFGNIFAGSILVALIALFPPYIMWAPNAIWKSFDLFVGAIQAFIFALLTILYFSQAMELEEDHH</sequence>
<feature type="chain" id="PRO_1000145291" description="ATP synthase subunit a">
    <location>
        <begin position="1"/>
        <end position="250"/>
    </location>
</feature>
<feature type="transmembrane region" description="Helical" evidence="1">
    <location>
        <begin position="27"/>
        <end position="47"/>
    </location>
</feature>
<feature type="transmembrane region" description="Helical" evidence="1">
    <location>
        <begin position="83"/>
        <end position="103"/>
    </location>
</feature>
<feature type="transmembrane region" description="Helical" evidence="1">
    <location>
        <begin position="129"/>
        <end position="149"/>
    </location>
</feature>
<feature type="transmembrane region" description="Helical" evidence="1">
    <location>
        <begin position="191"/>
        <end position="211"/>
    </location>
</feature>
<feature type="transmembrane region" description="Helical" evidence="1">
    <location>
        <begin position="219"/>
        <end position="239"/>
    </location>
</feature>
<gene>
    <name evidence="1" type="primary">atpB</name>
    <name type="ordered locus">MUL_3960</name>
</gene>
<evidence type="ECO:0000255" key="1">
    <source>
        <dbReference type="HAMAP-Rule" id="MF_01393"/>
    </source>
</evidence>
<proteinExistence type="inferred from homology"/>
<reference key="1">
    <citation type="journal article" date="2007" name="Genome Res.">
        <title>Reductive evolution and niche adaptation inferred from the genome of Mycobacterium ulcerans, the causative agent of Buruli ulcer.</title>
        <authorList>
            <person name="Stinear T.P."/>
            <person name="Seemann T."/>
            <person name="Pidot S."/>
            <person name="Frigui W."/>
            <person name="Reysset G."/>
            <person name="Garnier T."/>
            <person name="Meurice G."/>
            <person name="Simon D."/>
            <person name="Bouchier C."/>
            <person name="Ma L."/>
            <person name="Tichit M."/>
            <person name="Porter J.L."/>
            <person name="Ryan J."/>
            <person name="Johnson P.D.R."/>
            <person name="Davies J.K."/>
            <person name="Jenkin G.A."/>
            <person name="Small P.L.C."/>
            <person name="Jones L.M."/>
            <person name="Tekaia F."/>
            <person name="Laval F."/>
            <person name="Daffe M."/>
            <person name="Parkhill J."/>
            <person name="Cole S.T."/>
        </authorList>
    </citation>
    <scope>NUCLEOTIDE SEQUENCE [LARGE SCALE GENOMIC DNA]</scope>
    <source>
        <strain>Agy99</strain>
    </source>
</reference>
<keyword id="KW-0066">ATP synthesis</keyword>
<keyword id="KW-1003">Cell membrane</keyword>
<keyword id="KW-0138">CF(0)</keyword>
<keyword id="KW-0375">Hydrogen ion transport</keyword>
<keyword id="KW-0406">Ion transport</keyword>
<keyword id="KW-0472">Membrane</keyword>
<keyword id="KW-0812">Transmembrane</keyword>
<keyword id="KW-1133">Transmembrane helix</keyword>
<keyword id="KW-0813">Transport</keyword>